<dbReference type="EC" id="3.4.-.-" evidence="3"/>
<dbReference type="EMBL" id="GQ979703">
    <property type="protein sequence ID" value="ADC80081.1"/>
    <property type="molecule type" value="Genomic_DNA"/>
</dbReference>
<dbReference type="RefSeq" id="YP_009613485.1">
    <property type="nucleotide sequence ID" value="NC_042024.1"/>
</dbReference>
<dbReference type="SMR" id="D3WAC4"/>
<dbReference type="GeneID" id="40089860"/>
<dbReference type="Proteomes" id="UP000002348">
    <property type="component" value="Segment"/>
</dbReference>
<dbReference type="GO" id="GO:0008233">
    <property type="term" value="F:peptidase activity"/>
    <property type="evidence" value="ECO:0007669"/>
    <property type="project" value="UniProtKB-KW"/>
</dbReference>
<dbReference type="GO" id="GO:0006508">
    <property type="term" value="P:proteolysis"/>
    <property type="evidence" value="ECO:0007669"/>
    <property type="project" value="UniProtKB-KW"/>
</dbReference>
<dbReference type="GO" id="GO:0046797">
    <property type="term" value="P:viral procapsid maturation"/>
    <property type="evidence" value="ECO:0007669"/>
    <property type="project" value="UniProtKB-KW"/>
</dbReference>
<dbReference type="InterPro" id="IPR054613">
    <property type="entry name" value="Peptidase_S78_dom"/>
</dbReference>
<dbReference type="Pfam" id="PF04586">
    <property type="entry name" value="Peptidase_S78"/>
    <property type="match status" value="1"/>
</dbReference>
<comment type="function">
    <text evidence="4">Probable capsid maturation protease.</text>
</comment>
<comment type="similarity">
    <text evidence="3">Belongs to the skunalikevirus capsid maturation protease family.</text>
</comment>
<accession>D3WAC4</accession>
<reference key="1">
    <citation type="submission" date="2010-02" db="EMBL/GenBank/DDBJ databases">
        <title>Complete genomic sequence of Lactococcus lactis phage p2.</title>
        <authorList>
            <person name="Tremblay D.M."/>
            <person name="Deveau H."/>
            <person name="Moineau S."/>
        </authorList>
    </citation>
    <scope>NUCLEOTIDE SEQUENCE [LARGE SCALE GENOMIC DNA]</scope>
</reference>
<reference key="2">
    <citation type="journal article" date="2013" name="J. Virol.">
        <title>Structure, adsorption to host, and infection mechanism of virulent lactococcal phage p2.</title>
        <authorList>
            <person name="Bebeacua C."/>
            <person name="Tremblay D."/>
            <person name="Farenc C."/>
            <person name="Chapot-Chartier M.P."/>
            <person name="Sadovskaya I."/>
            <person name="van Heel M."/>
            <person name="Veesler D."/>
            <person name="Moineau S."/>
            <person name="Cambillau C."/>
        </authorList>
    </citation>
    <scope>FUNCTION</scope>
</reference>
<name>PRO_BPLP2</name>
<sequence length="178" mass="19947">MKLITNSAEIKVTENEDGSKSFQGIGSEVGVENRNGIVLTPNCIEFARERYPLLYEHGAGSSEVIGDAKVYYDLASNKYLTDFTLYDNAPNINKAVENGAFDSLSIAYYITDYEFNENDALVVNKAQFKEISLVSVPADPNAKFIQNALGEELTEERNKIIESRNALKEIEDIKKKYE</sequence>
<organismHost>
    <name type="scientific">Lactococcus lactis</name>
    <dbReference type="NCBI Taxonomy" id="1358"/>
</organismHost>
<feature type="chain" id="PRO_0000438227" description="Probable capsid maturation protease">
    <location>
        <begin position="1"/>
        <end position="178"/>
    </location>
</feature>
<feature type="coiled-coil region" evidence="1">
    <location>
        <begin position="146"/>
        <end position="178"/>
    </location>
</feature>
<keyword id="KW-0175">Coiled coil</keyword>
<keyword id="KW-0378">Hydrolase</keyword>
<keyword id="KW-0645">Protease</keyword>
<keyword id="KW-0118">Viral capsid assembly</keyword>
<keyword id="KW-1273">Viral capsid maturation</keyword>
<keyword id="KW-1188">Viral release from host cell</keyword>
<organism>
    <name type="scientific">Lactococcus phage p2</name>
    <name type="common">Lactococcus lactis bacteriophage p2</name>
    <dbReference type="NCBI Taxonomy" id="254252"/>
    <lineage>
        <taxon>Viruses</taxon>
        <taxon>Duplodnaviria</taxon>
        <taxon>Heunggongvirae</taxon>
        <taxon>Uroviricota</taxon>
        <taxon>Caudoviricetes</taxon>
        <taxon>Skunavirus</taxon>
    </lineage>
</organism>
<evidence type="ECO:0000255" key="1"/>
<evidence type="ECO:0000303" key="2">
    <source>
    </source>
</evidence>
<evidence type="ECO:0000305" key="3"/>
<evidence type="ECO:0000305" key="4">
    <source>
    </source>
</evidence>
<proteinExistence type="inferred from homology"/>
<protein>
    <recommendedName>
        <fullName evidence="2">Probable capsid maturation protease</fullName>
        <ecNumber evidence="3">3.4.-.-</ecNumber>
    </recommendedName>
    <alternativeName>
        <fullName evidence="3">Gene product 5</fullName>
        <shortName evidence="3">gp5</shortName>
    </alternativeName>
</protein>